<protein>
    <recommendedName>
        <fullName evidence="1">Chaperone protein HtpG</fullName>
    </recommendedName>
    <alternativeName>
        <fullName evidence="1">Heat shock protein HtpG</fullName>
    </alternativeName>
    <alternativeName>
        <fullName evidence="1">High temperature protein G</fullName>
    </alternativeName>
</protein>
<sequence>MSNKQNTAVQEFEYKAEMKQLLDLIVHSLYTHPEIFLRELVSNASDALSKARFSALTDDTMAKVSGEAAIRISLDAKTAAFAIEDTGIGMTEEELIANLGTVARSGTLGFMQALRQEKKELDGNLIGQFGVGFYSVFMVTDDVTVETRSARAGSEGLRWRSSGQGTYTIEKIDKKEPGTRISFTLKDEHKEFAEEYRVEHIIKKYSNFVDFPIYLETKQLNSITALWQRPKSELKQEEVNEFYKFISNDFNEPLDYLHVSVEGAVSFKAILFLPKEAPMELLYRQGELENKGPQLYVKKVMIQHECRDLLPEYLRFIAGVVDTEDLSLNVSREIVQSSPVMSKIRQILTGKILGWFEELATAQPEKFRTFYKAFGPIVKIGLNTDFTNRDKLIELLRFESTKTGEGEYVTLKEYAARMAPDQKEIYYHSGAGRAQLLANPNLEYFQDKGIEVLLLSDPVDVFVIPSIHEYDKKQLKSIEKADIDFSKATKDKTEPIAENLLVPLLKIFRETLGEGIEDVVESHRLVSSPVTLVSGKDAMDSQMERMMKMMQQEMPAGRKILEVNPSHPIIRNLSGMMMANDNNPLIRTAIHQLYEGALLLEGGLDSTTGFVSRMNELIEAATLSR</sequence>
<accession>Q3B3E6</accession>
<feature type="chain" id="PRO_0000237000" description="Chaperone protein HtpG">
    <location>
        <begin position="1"/>
        <end position="625"/>
    </location>
</feature>
<feature type="region of interest" description="A; substrate-binding" evidence="1">
    <location>
        <begin position="1"/>
        <end position="332"/>
    </location>
</feature>
<feature type="region of interest" description="B" evidence="1">
    <location>
        <begin position="333"/>
        <end position="545"/>
    </location>
</feature>
<feature type="region of interest" description="C" evidence="1">
    <location>
        <begin position="546"/>
        <end position="625"/>
    </location>
</feature>
<reference key="1">
    <citation type="submission" date="2005-08" db="EMBL/GenBank/DDBJ databases">
        <title>Complete sequence of Pelodictyon luteolum DSM 273.</title>
        <authorList>
            <consortium name="US DOE Joint Genome Institute"/>
            <person name="Copeland A."/>
            <person name="Lucas S."/>
            <person name="Lapidus A."/>
            <person name="Barry K."/>
            <person name="Detter J.C."/>
            <person name="Glavina T."/>
            <person name="Hammon N."/>
            <person name="Israni S."/>
            <person name="Pitluck S."/>
            <person name="Bryant D."/>
            <person name="Schmutz J."/>
            <person name="Larimer F."/>
            <person name="Land M."/>
            <person name="Kyrpides N."/>
            <person name="Ivanova N."/>
            <person name="Richardson P."/>
        </authorList>
    </citation>
    <scope>NUCLEOTIDE SEQUENCE [LARGE SCALE GENOMIC DNA]</scope>
    <source>
        <strain>DSM 273 / BCRC 81028 / 2530</strain>
    </source>
</reference>
<keyword id="KW-0067">ATP-binding</keyword>
<keyword id="KW-0143">Chaperone</keyword>
<keyword id="KW-0963">Cytoplasm</keyword>
<keyword id="KW-0547">Nucleotide-binding</keyword>
<keyword id="KW-1185">Reference proteome</keyword>
<keyword id="KW-0346">Stress response</keyword>
<name>HTPG_CHLL3</name>
<comment type="function">
    <text evidence="1">Molecular chaperone. Has ATPase activity.</text>
</comment>
<comment type="subunit">
    <text evidence="1">Homodimer.</text>
</comment>
<comment type="subcellular location">
    <subcellularLocation>
        <location evidence="1">Cytoplasm</location>
    </subcellularLocation>
</comment>
<comment type="similarity">
    <text evidence="1">Belongs to the heat shock protein 90 family.</text>
</comment>
<dbReference type="EMBL" id="CP000096">
    <property type="protein sequence ID" value="ABB24135.1"/>
    <property type="molecule type" value="Genomic_DNA"/>
</dbReference>
<dbReference type="RefSeq" id="WP_011358007.1">
    <property type="nucleotide sequence ID" value="NC_007512.1"/>
</dbReference>
<dbReference type="SMR" id="Q3B3E6"/>
<dbReference type="STRING" id="319225.Plut_1273"/>
<dbReference type="KEGG" id="plt:Plut_1273"/>
<dbReference type="eggNOG" id="COG0326">
    <property type="taxonomic scope" value="Bacteria"/>
</dbReference>
<dbReference type="HOGENOM" id="CLU_006684_3_1_10"/>
<dbReference type="OrthoDB" id="9802640at2"/>
<dbReference type="Proteomes" id="UP000002709">
    <property type="component" value="Chromosome"/>
</dbReference>
<dbReference type="GO" id="GO:0005737">
    <property type="term" value="C:cytoplasm"/>
    <property type="evidence" value="ECO:0007669"/>
    <property type="project" value="UniProtKB-SubCell"/>
</dbReference>
<dbReference type="GO" id="GO:0005524">
    <property type="term" value="F:ATP binding"/>
    <property type="evidence" value="ECO:0007669"/>
    <property type="project" value="UniProtKB-UniRule"/>
</dbReference>
<dbReference type="GO" id="GO:0016887">
    <property type="term" value="F:ATP hydrolysis activity"/>
    <property type="evidence" value="ECO:0007669"/>
    <property type="project" value="InterPro"/>
</dbReference>
<dbReference type="GO" id="GO:0140662">
    <property type="term" value="F:ATP-dependent protein folding chaperone"/>
    <property type="evidence" value="ECO:0007669"/>
    <property type="project" value="InterPro"/>
</dbReference>
<dbReference type="GO" id="GO:0051082">
    <property type="term" value="F:unfolded protein binding"/>
    <property type="evidence" value="ECO:0007669"/>
    <property type="project" value="UniProtKB-UniRule"/>
</dbReference>
<dbReference type="CDD" id="cd16927">
    <property type="entry name" value="HATPase_Hsp90-like"/>
    <property type="match status" value="1"/>
</dbReference>
<dbReference type="FunFam" id="3.30.565.10:FF:000009">
    <property type="entry name" value="Molecular chaperone HtpG"/>
    <property type="match status" value="1"/>
</dbReference>
<dbReference type="Gene3D" id="3.30.230.80">
    <property type="match status" value="1"/>
</dbReference>
<dbReference type="Gene3D" id="3.40.50.11260">
    <property type="match status" value="1"/>
</dbReference>
<dbReference type="Gene3D" id="1.20.120.790">
    <property type="entry name" value="Heat shock protein 90, C-terminal domain"/>
    <property type="match status" value="1"/>
</dbReference>
<dbReference type="Gene3D" id="3.30.565.10">
    <property type="entry name" value="Histidine kinase-like ATPase, C-terminal domain"/>
    <property type="match status" value="1"/>
</dbReference>
<dbReference type="HAMAP" id="MF_00505">
    <property type="entry name" value="HSP90"/>
    <property type="match status" value="1"/>
</dbReference>
<dbReference type="InterPro" id="IPR036890">
    <property type="entry name" value="HATPase_C_sf"/>
</dbReference>
<dbReference type="InterPro" id="IPR037196">
    <property type="entry name" value="HSP90_C"/>
</dbReference>
<dbReference type="InterPro" id="IPR001404">
    <property type="entry name" value="Hsp90_fam"/>
</dbReference>
<dbReference type="InterPro" id="IPR020575">
    <property type="entry name" value="Hsp90_N"/>
</dbReference>
<dbReference type="InterPro" id="IPR020568">
    <property type="entry name" value="Ribosomal_Su5_D2-typ_SF"/>
</dbReference>
<dbReference type="NCBIfam" id="NF003555">
    <property type="entry name" value="PRK05218.1"/>
    <property type="match status" value="1"/>
</dbReference>
<dbReference type="PANTHER" id="PTHR11528">
    <property type="entry name" value="HEAT SHOCK PROTEIN 90 FAMILY MEMBER"/>
    <property type="match status" value="1"/>
</dbReference>
<dbReference type="Pfam" id="PF13589">
    <property type="entry name" value="HATPase_c_3"/>
    <property type="match status" value="1"/>
</dbReference>
<dbReference type="Pfam" id="PF00183">
    <property type="entry name" value="HSP90"/>
    <property type="match status" value="1"/>
</dbReference>
<dbReference type="PIRSF" id="PIRSF002583">
    <property type="entry name" value="Hsp90"/>
    <property type="match status" value="1"/>
</dbReference>
<dbReference type="PRINTS" id="PR00775">
    <property type="entry name" value="HEATSHOCK90"/>
</dbReference>
<dbReference type="SMART" id="SM00387">
    <property type="entry name" value="HATPase_c"/>
    <property type="match status" value="1"/>
</dbReference>
<dbReference type="SUPFAM" id="SSF55874">
    <property type="entry name" value="ATPase domain of HSP90 chaperone/DNA topoisomerase II/histidine kinase"/>
    <property type="match status" value="1"/>
</dbReference>
<dbReference type="SUPFAM" id="SSF110942">
    <property type="entry name" value="HSP90 C-terminal domain"/>
    <property type="match status" value="1"/>
</dbReference>
<dbReference type="SUPFAM" id="SSF54211">
    <property type="entry name" value="Ribosomal protein S5 domain 2-like"/>
    <property type="match status" value="1"/>
</dbReference>
<proteinExistence type="inferred from homology"/>
<evidence type="ECO:0000255" key="1">
    <source>
        <dbReference type="HAMAP-Rule" id="MF_00505"/>
    </source>
</evidence>
<organism>
    <name type="scientific">Chlorobium luteolum (strain DSM 273 / BCRC 81028 / 2530)</name>
    <name type="common">Pelodictyon luteolum</name>
    <dbReference type="NCBI Taxonomy" id="319225"/>
    <lineage>
        <taxon>Bacteria</taxon>
        <taxon>Pseudomonadati</taxon>
        <taxon>Chlorobiota</taxon>
        <taxon>Chlorobiia</taxon>
        <taxon>Chlorobiales</taxon>
        <taxon>Chlorobiaceae</taxon>
        <taxon>Chlorobium/Pelodictyon group</taxon>
        <taxon>Pelodictyon</taxon>
    </lineage>
</organism>
<gene>
    <name evidence="1" type="primary">htpG</name>
    <name type="ordered locus">Plut_1273</name>
</gene>